<comment type="function">
    <text evidence="1">Specifically methylates the N7 position of a guanine in 16S rRNA.</text>
</comment>
<comment type="subcellular location">
    <subcellularLocation>
        <location evidence="1">Cytoplasm</location>
    </subcellularLocation>
</comment>
<comment type="similarity">
    <text evidence="1">Belongs to the methyltransferase superfamily. RNA methyltransferase RsmG family.</text>
</comment>
<keyword id="KW-0963">Cytoplasm</keyword>
<keyword id="KW-0489">Methyltransferase</keyword>
<keyword id="KW-1185">Reference proteome</keyword>
<keyword id="KW-0698">rRNA processing</keyword>
<keyword id="KW-0949">S-adenosyl-L-methionine</keyword>
<keyword id="KW-0808">Transferase</keyword>
<accession>A5VHQ2</accession>
<name>RSMG_LIMRD</name>
<reference key="1">
    <citation type="journal article" date="2011" name="PLoS Genet.">
        <title>The evolution of host specialization in the vertebrate gut symbiont Lactobacillus reuteri.</title>
        <authorList>
            <person name="Frese S.A."/>
            <person name="Benson A.K."/>
            <person name="Tannock G.W."/>
            <person name="Loach D.M."/>
            <person name="Kim J."/>
            <person name="Zhang M."/>
            <person name="Oh P.L."/>
            <person name="Heng N.C."/>
            <person name="Patil P.B."/>
            <person name="Juge N."/>
            <person name="Mackenzie D.A."/>
            <person name="Pearson B.M."/>
            <person name="Lapidus A."/>
            <person name="Dalin E."/>
            <person name="Tice H."/>
            <person name="Goltsman E."/>
            <person name="Land M."/>
            <person name="Hauser L."/>
            <person name="Ivanova N."/>
            <person name="Kyrpides N.C."/>
            <person name="Walter J."/>
        </authorList>
    </citation>
    <scope>NUCLEOTIDE SEQUENCE [LARGE SCALE GENOMIC DNA]</scope>
    <source>
        <strain>DSM 20016</strain>
    </source>
</reference>
<proteinExistence type="inferred from homology"/>
<sequence length="241" mass="26540">MNPEQFQQALADHGITLSAEQMQQFADYYQLLVETNEHVNLTRITEKNEVYLKHFYDSITGAFAEPRLESEDLTLCDIGAGAGFPSLPLKIAFPQLKVTIVDSLNKRIAFLEDLVAKLGLTGVTLIHDRAETFSAKTSPYREKFDIVTARAVARLSVLSELCLPAAKVGGEFIAYKASAAPEELQQGGTAIKQLGGKVQKTVTLTLPGTDEERNIIVIDKIKATPKKYPRRPGLPSKKPIQ</sequence>
<gene>
    <name evidence="1" type="primary">rsmG</name>
    <name type="ordered locus">Lreu_0104</name>
</gene>
<organism>
    <name type="scientific">Limosilactobacillus reuteri (strain DSM 20016)</name>
    <name type="common">Lactobacillus reuteri</name>
    <dbReference type="NCBI Taxonomy" id="557436"/>
    <lineage>
        <taxon>Bacteria</taxon>
        <taxon>Bacillati</taxon>
        <taxon>Bacillota</taxon>
        <taxon>Bacilli</taxon>
        <taxon>Lactobacillales</taxon>
        <taxon>Lactobacillaceae</taxon>
        <taxon>Limosilactobacillus</taxon>
    </lineage>
</organism>
<protein>
    <recommendedName>
        <fullName evidence="1">Ribosomal RNA small subunit methyltransferase G</fullName>
        <ecNumber evidence="1">2.1.1.-</ecNumber>
    </recommendedName>
    <alternativeName>
        <fullName evidence="1">16S rRNA 7-methylguanosine methyltransferase</fullName>
        <shortName evidence="1">16S rRNA m7G methyltransferase</shortName>
    </alternativeName>
</protein>
<evidence type="ECO:0000255" key="1">
    <source>
        <dbReference type="HAMAP-Rule" id="MF_00074"/>
    </source>
</evidence>
<dbReference type="EC" id="2.1.1.-" evidence="1"/>
<dbReference type="EMBL" id="CP000705">
    <property type="protein sequence ID" value="ABQ82376.1"/>
    <property type="molecule type" value="Genomic_DNA"/>
</dbReference>
<dbReference type="RefSeq" id="WP_003669663.1">
    <property type="nucleotide sequence ID" value="NC_009513.1"/>
</dbReference>
<dbReference type="SMR" id="A5VHQ2"/>
<dbReference type="STRING" id="557436.Lreu_0104"/>
<dbReference type="KEGG" id="lre:Lreu_0104"/>
<dbReference type="PATRIC" id="fig|557436.17.peg.279"/>
<dbReference type="eggNOG" id="COG0357">
    <property type="taxonomic scope" value="Bacteria"/>
</dbReference>
<dbReference type="HOGENOM" id="CLU_065341_0_2_9"/>
<dbReference type="Proteomes" id="UP000001991">
    <property type="component" value="Chromosome"/>
</dbReference>
<dbReference type="GO" id="GO:0005829">
    <property type="term" value="C:cytosol"/>
    <property type="evidence" value="ECO:0007669"/>
    <property type="project" value="TreeGrafter"/>
</dbReference>
<dbReference type="GO" id="GO:0070043">
    <property type="term" value="F:rRNA (guanine-N7-)-methyltransferase activity"/>
    <property type="evidence" value="ECO:0007669"/>
    <property type="project" value="UniProtKB-UniRule"/>
</dbReference>
<dbReference type="CDD" id="cd02440">
    <property type="entry name" value="AdoMet_MTases"/>
    <property type="match status" value="1"/>
</dbReference>
<dbReference type="FunFam" id="3.40.50.150:FF:000041">
    <property type="entry name" value="Ribosomal RNA small subunit methyltransferase G"/>
    <property type="match status" value="1"/>
</dbReference>
<dbReference type="Gene3D" id="3.40.50.150">
    <property type="entry name" value="Vaccinia Virus protein VP39"/>
    <property type="match status" value="1"/>
</dbReference>
<dbReference type="HAMAP" id="MF_00074">
    <property type="entry name" value="16SrRNA_methyltr_G"/>
    <property type="match status" value="1"/>
</dbReference>
<dbReference type="InterPro" id="IPR003682">
    <property type="entry name" value="rRNA_ssu_MeTfrase_G"/>
</dbReference>
<dbReference type="InterPro" id="IPR029063">
    <property type="entry name" value="SAM-dependent_MTases_sf"/>
</dbReference>
<dbReference type="NCBIfam" id="TIGR00138">
    <property type="entry name" value="rsmG_gidB"/>
    <property type="match status" value="1"/>
</dbReference>
<dbReference type="PANTHER" id="PTHR31760">
    <property type="entry name" value="S-ADENOSYL-L-METHIONINE-DEPENDENT METHYLTRANSFERASES SUPERFAMILY PROTEIN"/>
    <property type="match status" value="1"/>
</dbReference>
<dbReference type="PANTHER" id="PTHR31760:SF0">
    <property type="entry name" value="S-ADENOSYL-L-METHIONINE-DEPENDENT METHYLTRANSFERASES SUPERFAMILY PROTEIN"/>
    <property type="match status" value="1"/>
</dbReference>
<dbReference type="Pfam" id="PF02527">
    <property type="entry name" value="GidB"/>
    <property type="match status" value="1"/>
</dbReference>
<dbReference type="PIRSF" id="PIRSF003078">
    <property type="entry name" value="GidB"/>
    <property type="match status" value="1"/>
</dbReference>
<dbReference type="SUPFAM" id="SSF53335">
    <property type="entry name" value="S-adenosyl-L-methionine-dependent methyltransferases"/>
    <property type="match status" value="1"/>
</dbReference>
<feature type="chain" id="PRO_1000057508" description="Ribosomal RNA small subunit methyltransferase G">
    <location>
        <begin position="1"/>
        <end position="241"/>
    </location>
</feature>
<feature type="binding site" evidence="1">
    <location>
        <position position="79"/>
    </location>
    <ligand>
        <name>S-adenosyl-L-methionine</name>
        <dbReference type="ChEBI" id="CHEBI:59789"/>
    </ligand>
</feature>
<feature type="binding site" evidence="1">
    <location>
        <position position="84"/>
    </location>
    <ligand>
        <name>S-adenosyl-L-methionine</name>
        <dbReference type="ChEBI" id="CHEBI:59789"/>
    </ligand>
</feature>
<feature type="binding site" evidence="1">
    <location>
        <begin position="130"/>
        <end position="131"/>
    </location>
    <ligand>
        <name>S-adenosyl-L-methionine</name>
        <dbReference type="ChEBI" id="CHEBI:59789"/>
    </ligand>
</feature>
<feature type="binding site" evidence="1">
    <location>
        <position position="150"/>
    </location>
    <ligand>
        <name>S-adenosyl-L-methionine</name>
        <dbReference type="ChEBI" id="CHEBI:59789"/>
    </ligand>
</feature>